<gene>
    <name evidence="1" type="primary">ctaA</name>
    <name type="ordered locus">NSE_0855</name>
</gene>
<keyword id="KW-1003">Cell membrane</keyword>
<keyword id="KW-0350">Heme biosynthesis</keyword>
<keyword id="KW-0408">Iron</keyword>
<keyword id="KW-0472">Membrane</keyword>
<keyword id="KW-0479">Metal-binding</keyword>
<keyword id="KW-0560">Oxidoreductase</keyword>
<keyword id="KW-0812">Transmembrane</keyword>
<keyword id="KW-1133">Transmembrane helix</keyword>
<evidence type="ECO:0000255" key="1">
    <source>
        <dbReference type="HAMAP-Rule" id="MF_01665"/>
    </source>
</evidence>
<protein>
    <recommendedName>
        <fullName evidence="1">Heme A synthase</fullName>
        <shortName evidence="1">HAS</shortName>
        <ecNumber evidence="1">1.17.99.9</ecNumber>
    </recommendedName>
    <alternativeName>
        <fullName evidence="1">Cytochrome aa3-controlling protein</fullName>
    </alternativeName>
</protein>
<dbReference type="EC" id="1.17.99.9" evidence="1"/>
<dbReference type="EMBL" id="CP000237">
    <property type="protein sequence ID" value="ABD45602.1"/>
    <property type="molecule type" value="Genomic_DNA"/>
</dbReference>
<dbReference type="SMR" id="Q2GCS4"/>
<dbReference type="STRING" id="222891.NSE_0855"/>
<dbReference type="KEGG" id="nse:NSE_0855"/>
<dbReference type="eggNOG" id="COG1612">
    <property type="taxonomic scope" value="Bacteria"/>
</dbReference>
<dbReference type="HOGENOM" id="CLU_017627_0_0_5"/>
<dbReference type="OrthoDB" id="9793156at2"/>
<dbReference type="UniPathway" id="UPA00269">
    <property type="reaction ID" value="UER00713"/>
</dbReference>
<dbReference type="Proteomes" id="UP000001942">
    <property type="component" value="Chromosome"/>
</dbReference>
<dbReference type="GO" id="GO:0005886">
    <property type="term" value="C:plasma membrane"/>
    <property type="evidence" value="ECO:0007669"/>
    <property type="project" value="UniProtKB-SubCell"/>
</dbReference>
<dbReference type="GO" id="GO:0046872">
    <property type="term" value="F:metal ion binding"/>
    <property type="evidence" value="ECO:0007669"/>
    <property type="project" value="UniProtKB-KW"/>
</dbReference>
<dbReference type="GO" id="GO:0016653">
    <property type="term" value="F:oxidoreductase activity, acting on NAD(P)H, heme protein as acceptor"/>
    <property type="evidence" value="ECO:0007669"/>
    <property type="project" value="InterPro"/>
</dbReference>
<dbReference type="GO" id="GO:0006784">
    <property type="term" value="P:heme A biosynthetic process"/>
    <property type="evidence" value="ECO:0007669"/>
    <property type="project" value="UniProtKB-UniRule"/>
</dbReference>
<dbReference type="HAMAP" id="MF_01665">
    <property type="entry name" value="HemeA_synth_type2"/>
    <property type="match status" value="1"/>
</dbReference>
<dbReference type="InterPro" id="IPR003780">
    <property type="entry name" value="COX15/CtaA_fam"/>
</dbReference>
<dbReference type="InterPro" id="IPR023754">
    <property type="entry name" value="HemeA_Synthase_type2"/>
</dbReference>
<dbReference type="PANTHER" id="PTHR23289">
    <property type="entry name" value="CYTOCHROME C OXIDASE ASSEMBLY PROTEIN COX15"/>
    <property type="match status" value="1"/>
</dbReference>
<dbReference type="PANTHER" id="PTHR23289:SF2">
    <property type="entry name" value="CYTOCHROME C OXIDASE ASSEMBLY PROTEIN COX15 HOMOLOG"/>
    <property type="match status" value="1"/>
</dbReference>
<dbReference type="Pfam" id="PF02628">
    <property type="entry name" value="COX15-CtaA"/>
    <property type="match status" value="1"/>
</dbReference>
<sequence length="325" mass="36979">MSYRTWLAVCILLILSMVSIGGFTRLTESGLSITEWKPVTGVIPPLSKNAWQKEFDKYKNTPEYKVRHFSISYAEFQFIYLVEYFHRLVGRILGLVFFIGLVYFFVVGNLARESRLRLCFALVLGVIQGFVGWYMVKSGLLDVPAVSHYRLALHLFCASLLFMVLVYEFLSPTVIKGSVFKWHLVGCSLMFLLSMQIILGGLVAGLKAGLICSTFPLMNGEFFPAEIFHELSLNCFNDPVAVQFLHRMSAFLLTFICLVCLVISFFYDRAFRARVFLVASMMLLQMFFGVLTLLFHIPIDIALLHQIMAFILLGICVSFLRVRSG</sequence>
<proteinExistence type="inferred from homology"/>
<name>CTAA_NEOSM</name>
<organism>
    <name type="scientific">Neorickettsia sennetsu (strain ATCC VR-367 / Miyayama)</name>
    <name type="common">Ehrlichia sennetsu</name>
    <dbReference type="NCBI Taxonomy" id="222891"/>
    <lineage>
        <taxon>Bacteria</taxon>
        <taxon>Pseudomonadati</taxon>
        <taxon>Pseudomonadota</taxon>
        <taxon>Alphaproteobacteria</taxon>
        <taxon>Rickettsiales</taxon>
        <taxon>Anaplasmataceae</taxon>
        <taxon>Neorickettsia</taxon>
    </lineage>
</organism>
<reference key="1">
    <citation type="journal article" date="2006" name="PLoS Genet.">
        <title>Comparative genomics of emerging human ehrlichiosis agents.</title>
        <authorList>
            <person name="Dunning Hotopp J.C."/>
            <person name="Lin M."/>
            <person name="Madupu R."/>
            <person name="Crabtree J."/>
            <person name="Angiuoli S.V."/>
            <person name="Eisen J.A."/>
            <person name="Seshadri R."/>
            <person name="Ren Q."/>
            <person name="Wu M."/>
            <person name="Utterback T.R."/>
            <person name="Smith S."/>
            <person name="Lewis M."/>
            <person name="Khouri H."/>
            <person name="Zhang C."/>
            <person name="Niu H."/>
            <person name="Lin Q."/>
            <person name="Ohashi N."/>
            <person name="Zhi N."/>
            <person name="Nelson W.C."/>
            <person name="Brinkac L.M."/>
            <person name="Dodson R.J."/>
            <person name="Rosovitz M.J."/>
            <person name="Sundaram J.P."/>
            <person name="Daugherty S.C."/>
            <person name="Davidsen T."/>
            <person name="Durkin A.S."/>
            <person name="Gwinn M.L."/>
            <person name="Haft D.H."/>
            <person name="Selengut J.D."/>
            <person name="Sullivan S.A."/>
            <person name="Zafar N."/>
            <person name="Zhou L."/>
            <person name="Benahmed F."/>
            <person name="Forberger H."/>
            <person name="Halpin R."/>
            <person name="Mulligan S."/>
            <person name="Robinson J."/>
            <person name="White O."/>
            <person name="Rikihisa Y."/>
            <person name="Tettelin H."/>
        </authorList>
    </citation>
    <scope>NUCLEOTIDE SEQUENCE [LARGE SCALE GENOMIC DNA]</scope>
    <source>
        <strain>ATCC VR-367 / Miyayama</strain>
    </source>
</reference>
<accession>Q2GCS4</accession>
<comment type="function">
    <text evidence="1">Catalyzes the conversion of heme O to heme A by two successive hydroxylations of the methyl group at C8. The first hydroxylation forms heme I, the second hydroxylation results in an unstable dihydroxymethyl group, which spontaneously dehydrates, resulting in the formyl group of heme A.</text>
</comment>
<comment type="catalytic activity">
    <reaction evidence="1">
        <text>Fe(II)-heme o + 2 A + H2O = Fe(II)-heme a + 2 AH2</text>
        <dbReference type="Rhea" id="RHEA:63388"/>
        <dbReference type="ChEBI" id="CHEBI:13193"/>
        <dbReference type="ChEBI" id="CHEBI:15377"/>
        <dbReference type="ChEBI" id="CHEBI:17499"/>
        <dbReference type="ChEBI" id="CHEBI:60530"/>
        <dbReference type="ChEBI" id="CHEBI:61715"/>
        <dbReference type="EC" id="1.17.99.9"/>
    </reaction>
    <physiologicalReaction direction="left-to-right" evidence="1">
        <dbReference type="Rhea" id="RHEA:63389"/>
    </physiologicalReaction>
</comment>
<comment type="cofactor">
    <cofactor evidence="1">
        <name>heme b</name>
        <dbReference type="ChEBI" id="CHEBI:60344"/>
    </cofactor>
</comment>
<comment type="pathway">
    <text evidence="1">Porphyrin-containing compound metabolism; heme A biosynthesis; heme A from heme O: step 1/1.</text>
</comment>
<comment type="subunit">
    <text evidence="1">Interacts with CtaB.</text>
</comment>
<comment type="subcellular location">
    <subcellularLocation>
        <location evidence="1">Cell membrane</location>
        <topology evidence="1">Multi-pass membrane protein</topology>
    </subcellularLocation>
</comment>
<comment type="similarity">
    <text evidence="1">Belongs to the COX15/CtaA family. Type 2 subfamily.</text>
</comment>
<feature type="chain" id="PRO_0000349048" description="Heme A synthase">
    <location>
        <begin position="1"/>
        <end position="325"/>
    </location>
</feature>
<feature type="transmembrane region" description="Helical" evidence="1">
    <location>
        <begin position="6"/>
        <end position="26"/>
    </location>
</feature>
<feature type="transmembrane region" description="Helical" evidence="1">
    <location>
        <begin position="88"/>
        <end position="108"/>
    </location>
</feature>
<feature type="transmembrane region" description="Helical" evidence="1">
    <location>
        <begin position="116"/>
        <end position="136"/>
    </location>
</feature>
<feature type="transmembrane region" description="Helical" evidence="1">
    <location>
        <begin position="155"/>
        <end position="175"/>
    </location>
</feature>
<feature type="transmembrane region" description="Helical" evidence="1">
    <location>
        <begin position="184"/>
        <end position="204"/>
    </location>
</feature>
<feature type="transmembrane region" description="Helical" evidence="1">
    <location>
        <begin position="248"/>
        <end position="268"/>
    </location>
</feature>
<feature type="transmembrane region" description="Helical" evidence="1">
    <location>
        <begin position="275"/>
        <end position="295"/>
    </location>
</feature>
<feature type="transmembrane region" description="Helical" evidence="1">
    <location>
        <begin position="297"/>
        <end position="317"/>
    </location>
</feature>
<feature type="binding site" description="axial binding residue" evidence="1">
    <location>
        <position position="246"/>
    </location>
    <ligand>
        <name>heme</name>
        <dbReference type="ChEBI" id="CHEBI:30413"/>
    </ligand>
    <ligandPart>
        <name>Fe</name>
        <dbReference type="ChEBI" id="CHEBI:18248"/>
    </ligandPart>
</feature>
<feature type="binding site" description="axial binding residue" evidence="1">
    <location>
        <position position="305"/>
    </location>
    <ligand>
        <name>heme</name>
        <dbReference type="ChEBI" id="CHEBI:30413"/>
    </ligand>
    <ligandPart>
        <name>Fe</name>
        <dbReference type="ChEBI" id="CHEBI:18248"/>
    </ligandPart>
</feature>